<protein>
    <recommendedName>
        <fullName evidence="1">ATP-dependent protease ATPase subunit HslU</fullName>
    </recommendedName>
    <alternativeName>
        <fullName evidence="1">Unfoldase HslU</fullName>
    </alternativeName>
</protein>
<proteinExistence type="inferred from homology"/>
<dbReference type="EMBL" id="CP000851">
    <property type="protein sequence ID" value="ABV89093.1"/>
    <property type="molecule type" value="Genomic_DNA"/>
</dbReference>
<dbReference type="RefSeq" id="WP_012156975.1">
    <property type="nucleotide sequence ID" value="NC_009901.1"/>
</dbReference>
<dbReference type="SMR" id="A8H956"/>
<dbReference type="STRING" id="398579.Spea_3782"/>
<dbReference type="KEGG" id="spl:Spea_3782"/>
<dbReference type="eggNOG" id="COG1220">
    <property type="taxonomic scope" value="Bacteria"/>
</dbReference>
<dbReference type="HOGENOM" id="CLU_033123_0_0_6"/>
<dbReference type="OrthoDB" id="9804062at2"/>
<dbReference type="Proteomes" id="UP000002608">
    <property type="component" value="Chromosome"/>
</dbReference>
<dbReference type="GO" id="GO:0009376">
    <property type="term" value="C:HslUV protease complex"/>
    <property type="evidence" value="ECO:0007669"/>
    <property type="project" value="UniProtKB-UniRule"/>
</dbReference>
<dbReference type="GO" id="GO:0005524">
    <property type="term" value="F:ATP binding"/>
    <property type="evidence" value="ECO:0007669"/>
    <property type="project" value="UniProtKB-UniRule"/>
</dbReference>
<dbReference type="GO" id="GO:0016887">
    <property type="term" value="F:ATP hydrolysis activity"/>
    <property type="evidence" value="ECO:0007669"/>
    <property type="project" value="InterPro"/>
</dbReference>
<dbReference type="GO" id="GO:0008233">
    <property type="term" value="F:peptidase activity"/>
    <property type="evidence" value="ECO:0007669"/>
    <property type="project" value="InterPro"/>
</dbReference>
<dbReference type="GO" id="GO:0036402">
    <property type="term" value="F:proteasome-activating activity"/>
    <property type="evidence" value="ECO:0007669"/>
    <property type="project" value="UniProtKB-UniRule"/>
</dbReference>
<dbReference type="GO" id="GO:0043335">
    <property type="term" value="P:protein unfolding"/>
    <property type="evidence" value="ECO:0007669"/>
    <property type="project" value="UniProtKB-UniRule"/>
</dbReference>
<dbReference type="GO" id="GO:0051603">
    <property type="term" value="P:proteolysis involved in protein catabolic process"/>
    <property type="evidence" value="ECO:0007669"/>
    <property type="project" value="TreeGrafter"/>
</dbReference>
<dbReference type="CDD" id="cd19498">
    <property type="entry name" value="RecA-like_HslU"/>
    <property type="match status" value="1"/>
</dbReference>
<dbReference type="FunFam" id="1.10.8.10:FF:000028">
    <property type="entry name" value="ATP-dependent protease ATPase subunit HslU"/>
    <property type="match status" value="1"/>
</dbReference>
<dbReference type="FunFam" id="1.10.8.60:FF:000027">
    <property type="entry name" value="ATP-dependent protease ATPase subunit HslU"/>
    <property type="match status" value="1"/>
</dbReference>
<dbReference type="FunFam" id="3.40.50.300:FF:000213">
    <property type="entry name" value="ATP-dependent protease ATPase subunit HslU"/>
    <property type="match status" value="1"/>
</dbReference>
<dbReference type="FunFam" id="3.40.50.300:FF:000220">
    <property type="entry name" value="ATP-dependent protease ATPase subunit HslU"/>
    <property type="match status" value="1"/>
</dbReference>
<dbReference type="Gene3D" id="1.10.8.60">
    <property type="match status" value="1"/>
</dbReference>
<dbReference type="Gene3D" id="3.40.50.300">
    <property type="entry name" value="P-loop containing nucleotide triphosphate hydrolases"/>
    <property type="match status" value="2"/>
</dbReference>
<dbReference type="HAMAP" id="MF_00249">
    <property type="entry name" value="HslU"/>
    <property type="match status" value="1"/>
</dbReference>
<dbReference type="InterPro" id="IPR003593">
    <property type="entry name" value="AAA+_ATPase"/>
</dbReference>
<dbReference type="InterPro" id="IPR050052">
    <property type="entry name" value="ATP-dep_Clp_protease_ClpX"/>
</dbReference>
<dbReference type="InterPro" id="IPR003959">
    <property type="entry name" value="ATPase_AAA_core"/>
</dbReference>
<dbReference type="InterPro" id="IPR019489">
    <property type="entry name" value="Clp_ATPase_C"/>
</dbReference>
<dbReference type="InterPro" id="IPR004491">
    <property type="entry name" value="HslU"/>
</dbReference>
<dbReference type="InterPro" id="IPR027417">
    <property type="entry name" value="P-loop_NTPase"/>
</dbReference>
<dbReference type="NCBIfam" id="TIGR00390">
    <property type="entry name" value="hslU"/>
    <property type="match status" value="1"/>
</dbReference>
<dbReference type="NCBIfam" id="NF003544">
    <property type="entry name" value="PRK05201.1"/>
    <property type="match status" value="1"/>
</dbReference>
<dbReference type="PANTHER" id="PTHR48102">
    <property type="entry name" value="ATP-DEPENDENT CLP PROTEASE ATP-BINDING SUBUNIT CLPX-LIKE, MITOCHONDRIAL-RELATED"/>
    <property type="match status" value="1"/>
</dbReference>
<dbReference type="PANTHER" id="PTHR48102:SF3">
    <property type="entry name" value="ATP-DEPENDENT PROTEASE ATPASE SUBUNIT HSLU"/>
    <property type="match status" value="1"/>
</dbReference>
<dbReference type="Pfam" id="PF00004">
    <property type="entry name" value="AAA"/>
    <property type="match status" value="1"/>
</dbReference>
<dbReference type="Pfam" id="PF07724">
    <property type="entry name" value="AAA_2"/>
    <property type="match status" value="1"/>
</dbReference>
<dbReference type="SMART" id="SM00382">
    <property type="entry name" value="AAA"/>
    <property type="match status" value="1"/>
</dbReference>
<dbReference type="SMART" id="SM01086">
    <property type="entry name" value="ClpB_D2-small"/>
    <property type="match status" value="1"/>
</dbReference>
<dbReference type="SUPFAM" id="SSF52540">
    <property type="entry name" value="P-loop containing nucleoside triphosphate hydrolases"/>
    <property type="match status" value="1"/>
</dbReference>
<reference key="1">
    <citation type="submission" date="2007-10" db="EMBL/GenBank/DDBJ databases">
        <title>Complete sequence of Shewanella pealeana ATCC 700345.</title>
        <authorList>
            <consortium name="US DOE Joint Genome Institute"/>
            <person name="Copeland A."/>
            <person name="Lucas S."/>
            <person name="Lapidus A."/>
            <person name="Barry K."/>
            <person name="Glavina del Rio T."/>
            <person name="Dalin E."/>
            <person name="Tice H."/>
            <person name="Pitluck S."/>
            <person name="Chertkov O."/>
            <person name="Brettin T."/>
            <person name="Bruce D."/>
            <person name="Detter J.C."/>
            <person name="Han C."/>
            <person name="Schmutz J."/>
            <person name="Larimer F."/>
            <person name="Land M."/>
            <person name="Hauser L."/>
            <person name="Kyrpides N."/>
            <person name="Kim E."/>
            <person name="Zhao J.-S.Z."/>
            <person name="Manno D."/>
            <person name="Hawari J."/>
            <person name="Richardson P."/>
        </authorList>
    </citation>
    <scope>NUCLEOTIDE SEQUENCE [LARGE SCALE GENOMIC DNA]</scope>
    <source>
        <strain>ATCC 700345 / ANG-SQ1</strain>
    </source>
</reference>
<accession>A8H956</accession>
<name>HSLU_SHEPA</name>
<evidence type="ECO:0000255" key="1">
    <source>
        <dbReference type="HAMAP-Rule" id="MF_00249"/>
    </source>
</evidence>
<gene>
    <name evidence="1" type="primary">hslU</name>
    <name type="ordered locus">Spea_3782</name>
</gene>
<organism>
    <name type="scientific">Shewanella pealeana (strain ATCC 700345 / ANG-SQ1)</name>
    <dbReference type="NCBI Taxonomy" id="398579"/>
    <lineage>
        <taxon>Bacteria</taxon>
        <taxon>Pseudomonadati</taxon>
        <taxon>Pseudomonadota</taxon>
        <taxon>Gammaproteobacteria</taxon>
        <taxon>Alteromonadales</taxon>
        <taxon>Shewanellaceae</taxon>
        <taxon>Shewanella</taxon>
    </lineage>
</organism>
<comment type="function">
    <text evidence="1">ATPase subunit of a proteasome-like degradation complex; this subunit has chaperone activity. The binding of ATP and its subsequent hydrolysis by HslU are essential for unfolding of protein substrates subsequently hydrolyzed by HslV. HslU recognizes the N-terminal part of its protein substrates and unfolds these before they are guided to HslV for hydrolysis.</text>
</comment>
<comment type="subunit">
    <text evidence="1">A double ring-shaped homohexamer of HslV is capped on each side by a ring-shaped HslU homohexamer. The assembly of the HslU/HslV complex is dependent on binding of ATP.</text>
</comment>
<comment type="subcellular location">
    <subcellularLocation>
        <location evidence="1">Cytoplasm</location>
    </subcellularLocation>
</comment>
<comment type="similarity">
    <text evidence="1">Belongs to the ClpX chaperone family. HslU subfamily.</text>
</comment>
<sequence length="441" mass="49607">MSEMTPREIVHELDSHIIGQQKAKRSVAIALRNRWRRMQLAADLRQEVTPKNILMIGPTGVGKTEIARRLARLAKAPFIKVEATKFTEVGYVGKEVEQIIRDLTDSAIKLTREEQIKKCKFRAEEAAEERILDALLPKPKEDWDSEKSDGSATRQIFRKKLREGQLDDKEIEIDVSAPQAGIEIMSPPGMEEMTNQLQSMFQNMGPGASKRRKMPIKEAYKLLIEEEASKLINQEDLKEQAIELVEQHGIVFLDEIDKICKRGESSGPDVSREGVQRDLLPLVEGCTVNTKHGMVKTDHILFIASGAFQMSKPSDLIPELQGRLPIRVELDALTAGDFKRILTEPHASLTEQYIALMGTEGVTIEFTEDGIDSIAEAAWQVNERTENIGARRLHTVMERLMEELSYEASDKSGSVTVIDAAYVKASLDNLVQDEDLSRYIL</sequence>
<feature type="chain" id="PRO_1000078456" description="ATP-dependent protease ATPase subunit HslU">
    <location>
        <begin position="1"/>
        <end position="441"/>
    </location>
</feature>
<feature type="binding site" evidence="1">
    <location>
        <position position="18"/>
    </location>
    <ligand>
        <name>ATP</name>
        <dbReference type="ChEBI" id="CHEBI:30616"/>
    </ligand>
</feature>
<feature type="binding site" evidence="1">
    <location>
        <begin position="60"/>
        <end position="65"/>
    </location>
    <ligand>
        <name>ATP</name>
        <dbReference type="ChEBI" id="CHEBI:30616"/>
    </ligand>
</feature>
<feature type="binding site" evidence="1">
    <location>
        <position position="254"/>
    </location>
    <ligand>
        <name>ATP</name>
        <dbReference type="ChEBI" id="CHEBI:30616"/>
    </ligand>
</feature>
<feature type="binding site" evidence="1">
    <location>
        <position position="319"/>
    </location>
    <ligand>
        <name>ATP</name>
        <dbReference type="ChEBI" id="CHEBI:30616"/>
    </ligand>
</feature>
<feature type="binding site" evidence="1">
    <location>
        <position position="391"/>
    </location>
    <ligand>
        <name>ATP</name>
        <dbReference type="ChEBI" id="CHEBI:30616"/>
    </ligand>
</feature>
<keyword id="KW-0067">ATP-binding</keyword>
<keyword id="KW-0143">Chaperone</keyword>
<keyword id="KW-0963">Cytoplasm</keyword>
<keyword id="KW-0547">Nucleotide-binding</keyword>
<keyword id="KW-1185">Reference proteome</keyword>
<keyword id="KW-0346">Stress response</keyword>